<keyword id="KW-0217">Developmental protein</keyword>
<keyword id="KW-0221">Differentiation</keyword>
<keyword id="KW-0238">DNA-binding</keyword>
<keyword id="KW-0517">Myogenesis</keyword>
<keyword id="KW-0539">Nucleus</keyword>
<keyword id="KW-1185">Reference proteome</keyword>
<keyword id="KW-0804">Transcription</keyword>
<keyword id="KW-0805">Transcription regulation</keyword>
<dbReference type="EMBL" id="U05000">
    <property type="protein sequence ID" value="AAA74943.1"/>
    <property type="molecule type" value="Genomic_DNA"/>
</dbReference>
<dbReference type="EMBL" id="HE600919">
    <property type="protein sequence ID" value="CAP32157.3"/>
    <property type="molecule type" value="Genomic_DNA"/>
</dbReference>
<dbReference type="SMR" id="Q17295"/>
<dbReference type="FunCoup" id="Q17295">
    <property type="interactions" value="113"/>
</dbReference>
<dbReference type="STRING" id="6238.Q17295"/>
<dbReference type="KEGG" id="cbr:CBG_13470"/>
<dbReference type="CTD" id="8572906"/>
<dbReference type="WormBase" id="CBG13470a">
    <property type="protein sequence ID" value="CBP40297"/>
    <property type="gene ID" value="WBGene00034231"/>
    <property type="gene designation" value="Cbr-hlh-1"/>
</dbReference>
<dbReference type="eggNOG" id="KOG3960">
    <property type="taxonomic scope" value="Eukaryota"/>
</dbReference>
<dbReference type="HOGENOM" id="CLU_872198_0_0_1"/>
<dbReference type="InParanoid" id="Q17295"/>
<dbReference type="OMA" id="IMEQNQH"/>
<dbReference type="Proteomes" id="UP000008549">
    <property type="component" value="Unassembled WGS sequence"/>
</dbReference>
<dbReference type="GO" id="GO:0005634">
    <property type="term" value="C:nucleus"/>
    <property type="evidence" value="ECO:0007669"/>
    <property type="project" value="UniProtKB-SubCell"/>
</dbReference>
<dbReference type="GO" id="GO:0000981">
    <property type="term" value="F:DNA-binding transcription factor activity, RNA polymerase II-specific"/>
    <property type="evidence" value="ECO:0000318"/>
    <property type="project" value="GO_Central"/>
</dbReference>
<dbReference type="GO" id="GO:0046983">
    <property type="term" value="F:protein dimerization activity"/>
    <property type="evidence" value="ECO:0007669"/>
    <property type="project" value="InterPro"/>
</dbReference>
<dbReference type="GO" id="GO:0000978">
    <property type="term" value="F:RNA polymerase II cis-regulatory region sequence-specific DNA binding"/>
    <property type="evidence" value="ECO:0000318"/>
    <property type="project" value="GO_Central"/>
</dbReference>
<dbReference type="GO" id="GO:0030154">
    <property type="term" value="P:cell differentiation"/>
    <property type="evidence" value="ECO:0007669"/>
    <property type="project" value="UniProtKB-KW"/>
</dbReference>
<dbReference type="GO" id="GO:0007517">
    <property type="term" value="P:muscle organ development"/>
    <property type="evidence" value="ECO:0007669"/>
    <property type="project" value="UniProtKB-KW"/>
</dbReference>
<dbReference type="GO" id="GO:0045663">
    <property type="term" value="P:positive regulation of myoblast differentiation"/>
    <property type="evidence" value="ECO:0000318"/>
    <property type="project" value="GO_Central"/>
</dbReference>
<dbReference type="GO" id="GO:0006357">
    <property type="term" value="P:regulation of transcription by RNA polymerase II"/>
    <property type="evidence" value="ECO:0000318"/>
    <property type="project" value="GO_Central"/>
</dbReference>
<dbReference type="CDD" id="cd19699">
    <property type="entry name" value="bHLH_TS_dMYOD_like"/>
    <property type="match status" value="1"/>
</dbReference>
<dbReference type="FunFam" id="4.10.280.10:FF:000005">
    <property type="entry name" value="Myogenic factor"/>
    <property type="match status" value="1"/>
</dbReference>
<dbReference type="Gene3D" id="4.10.280.10">
    <property type="entry name" value="Helix-loop-helix DNA-binding domain"/>
    <property type="match status" value="1"/>
</dbReference>
<dbReference type="InterPro" id="IPR011598">
    <property type="entry name" value="bHLH_dom"/>
</dbReference>
<dbReference type="InterPro" id="IPR036638">
    <property type="entry name" value="HLH_DNA-bd_sf"/>
</dbReference>
<dbReference type="InterPro" id="IPR039704">
    <property type="entry name" value="Myogenic_factor"/>
</dbReference>
<dbReference type="PANTHER" id="PTHR11534">
    <property type="entry name" value="MYOGENIC FACTOR"/>
    <property type="match status" value="1"/>
</dbReference>
<dbReference type="PANTHER" id="PTHR11534:SF9">
    <property type="entry name" value="MYOGENIC-DETERMINATION PROTEIN"/>
    <property type="match status" value="1"/>
</dbReference>
<dbReference type="Pfam" id="PF00010">
    <property type="entry name" value="HLH"/>
    <property type="match status" value="1"/>
</dbReference>
<dbReference type="SMART" id="SM00353">
    <property type="entry name" value="HLH"/>
    <property type="match status" value="1"/>
</dbReference>
<dbReference type="SUPFAM" id="SSF47459">
    <property type="entry name" value="HLH, helix-loop-helix DNA-binding domain"/>
    <property type="match status" value="1"/>
</dbReference>
<dbReference type="PROSITE" id="PS50888">
    <property type="entry name" value="BHLH"/>
    <property type="match status" value="1"/>
</dbReference>
<organism>
    <name type="scientific">Caenorhabditis briggsae</name>
    <dbReference type="NCBI Taxonomy" id="6238"/>
    <lineage>
        <taxon>Eukaryota</taxon>
        <taxon>Metazoa</taxon>
        <taxon>Ecdysozoa</taxon>
        <taxon>Nematoda</taxon>
        <taxon>Chromadorea</taxon>
        <taxon>Rhabditida</taxon>
        <taxon>Rhabditina</taxon>
        <taxon>Rhabditomorpha</taxon>
        <taxon>Rhabditoidea</taxon>
        <taxon>Rhabditidae</taxon>
        <taxon>Peloderinae</taxon>
        <taxon>Caenorhabditis</taxon>
    </lineage>
</organism>
<comment type="function">
    <text>Accumulation defines the body wall muscle cell fate during embryogenesis.</text>
</comment>
<comment type="subunit">
    <text>Efficient DNA binding requires dimerization with another bHLH protein.</text>
</comment>
<comment type="subcellular location">
    <subcellularLocation>
        <location>Nucleus</location>
    </subcellularLocation>
</comment>
<comment type="tissue specificity">
    <text>Body wall muscle cells; in clonal muscle precursors, in a set of early embryonic blastomeres (the ms-granddaughters), and in six glial-like cells called GLRS.</text>
</comment>
<reference key="1">
    <citation type="journal article" date="1994" name="Dev. Biol.">
        <title>Elements regulating cell- and stage-specific expression of the C. elegans MyoD family homolog hlh-1.</title>
        <authorList>
            <person name="Krause M."/>
            <person name="Harrison S.W."/>
            <person name="Xu S.Q."/>
            <person name="Chen L."/>
            <person name="Fire A."/>
        </authorList>
    </citation>
    <scope>NUCLEOTIDE SEQUENCE [GENOMIC DNA]</scope>
</reference>
<reference key="2">
    <citation type="journal article" date="2003" name="PLoS Biol.">
        <title>The genome sequence of Caenorhabditis briggsae: a platform for comparative genomics.</title>
        <authorList>
            <person name="Stein L.D."/>
            <person name="Bao Z."/>
            <person name="Blasiar D."/>
            <person name="Blumenthal T."/>
            <person name="Brent M.R."/>
            <person name="Chen N."/>
            <person name="Chinwalla A."/>
            <person name="Clarke L."/>
            <person name="Clee C."/>
            <person name="Coghlan A."/>
            <person name="Coulson A."/>
            <person name="D'Eustachio P."/>
            <person name="Fitch D.H.A."/>
            <person name="Fulton L.A."/>
            <person name="Fulton R.E."/>
            <person name="Griffiths-Jones S."/>
            <person name="Harris T.W."/>
            <person name="Hillier L.W."/>
            <person name="Kamath R."/>
            <person name="Kuwabara P.E."/>
            <person name="Mardis E.R."/>
            <person name="Marra M.A."/>
            <person name="Miner T.L."/>
            <person name="Minx P."/>
            <person name="Mullikin J.C."/>
            <person name="Plumb R.W."/>
            <person name="Rogers J."/>
            <person name="Schein J.E."/>
            <person name="Sohrmann M."/>
            <person name="Spieth J."/>
            <person name="Stajich J.E."/>
            <person name="Wei C."/>
            <person name="Willey D."/>
            <person name="Wilson R.K."/>
            <person name="Durbin R.M."/>
            <person name="Waterston R.H."/>
        </authorList>
    </citation>
    <scope>NUCLEOTIDE SEQUENCE [LARGE SCALE GENOMIC DNA]</scope>
    <source>
        <strain>AF16</strain>
    </source>
</reference>
<proteinExistence type="evidence at transcript level"/>
<gene>
    <name type="primary">hlh-1</name>
    <name type="ORF">CBG13470</name>
</gene>
<protein>
    <recommendedName>
        <fullName>Myoblast determination protein 1 homolog</fullName>
        <shortName>MyoD protein 1</shortName>
    </recommendedName>
</protein>
<feature type="chain" id="PRO_0000127372" description="Myoblast determination protein 1 homolog">
    <location>
        <begin position="1"/>
        <end position="329"/>
    </location>
</feature>
<feature type="domain" description="bHLH" evidence="1">
    <location>
        <begin position="160"/>
        <end position="211"/>
    </location>
</feature>
<feature type="region of interest" description="Disordered" evidence="2">
    <location>
        <begin position="256"/>
        <end position="279"/>
    </location>
</feature>
<feature type="compositionally biased region" description="Acidic residues" evidence="2">
    <location>
        <begin position="263"/>
        <end position="273"/>
    </location>
</feature>
<evidence type="ECO:0000255" key="1">
    <source>
        <dbReference type="PROSITE-ProRule" id="PRU00981"/>
    </source>
</evidence>
<evidence type="ECO:0000256" key="2">
    <source>
        <dbReference type="SAM" id="MobiDB-lite"/>
    </source>
</evidence>
<accession>Q17295</accession>
<accession>A8XHP0</accession>
<name>MYOD1_CAEBR</name>
<sequence length="329" mass="36595">MNQTETSTAPANAETYDTNIYYTPSPRVTANDITTLTTFATPVPQALDYVNTQYNDIYRNQPATYYLPTYGQPGSSSFYPDFSNFNVARTQDFAALPTVAADIKPIIIKQEKEVSSGGSNNNDPTSTDLLGDGVAHSGDETAPIATLVAGANAPRRTKLDRRKAATMRERRRLRKVNEAFEVVKQRTCPNPNQRLPKVEILRSAIDYINTLERMLTSVGKTTKIMDQNHHLQMTQPISAAPHDYITSSHFANAGYNPDGPNVYDDEDLSDTDEDRDHHHHKLGNAIDLRRRNSLDGLARIVDNIPLLQSQPEVPNEIPAGSEDKKLEIL</sequence>